<name>LGT_XANE5</name>
<sequence length="296" mass="32728">MIYLHAIDPIAFSLGPVQVHWYGLMYLAAFFSAWALGRSRILRGRLPGVDMDGFSDLLFYGMLGVVLGGRIGYMLFYAFETFLANPLILFKVWEGGMSFHGGLLGVLIACWLWARKHRLHFFDVMDFVAPLVPLGLGFGRLGNFVGGELWGKFTQAGWGVIFPHAPELADRLPAQIQAQYAAGALNQFARHPSQLYEAALEGVVMFVVLWTFSMKPRARYAVSGLFALLYGVFRFIVEFVRVPDAPIGYLAFNWLTMGQILSLPLIAVGLVLLAMSRRAPVLQPVLPAPAGVEAAK</sequence>
<protein>
    <recommendedName>
        <fullName evidence="1">Phosphatidylglycerol--prolipoprotein diacylglyceryl transferase</fullName>
        <ecNumber evidence="1">2.5.1.145</ecNumber>
    </recommendedName>
</protein>
<dbReference type="EC" id="2.5.1.145" evidence="1"/>
<dbReference type="EMBL" id="AM039952">
    <property type="protein sequence ID" value="CAJ22525.1"/>
    <property type="molecule type" value="Genomic_DNA"/>
</dbReference>
<dbReference type="RefSeq" id="WP_011346474.1">
    <property type="nucleotide sequence ID" value="NZ_CP017190.1"/>
</dbReference>
<dbReference type="SMR" id="Q3BX88"/>
<dbReference type="STRING" id="456327.BJD11_18320"/>
<dbReference type="GeneID" id="93990083"/>
<dbReference type="KEGG" id="xcv:XCV0894"/>
<dbReference type="eggNOG" id="COG0682">
    <property type="taxonomic scope" value="Bacteria"/>
</dbReference>
<dbReference type="HOGENOM" id="CLU_013386_1_0_6"/>
<dbReference type="UniPathway" id="UPA00664"/>
<dbReference type="Proteomes" id="UP000007069">
    <property type="component" value="Chromosome"/>
</dbReference>
<dbReference type="GO" id="GO:0005886">
    <property type="term" value="C:plasma membrane"/>
    <property type="evidence" value="ECO:0007669"/>
    <property type="project" value="UniProtKB-SubCell"/>
</dbReference>
<dbReference type="GO" id="GO:0008961">
    <property type="term" value="F:phosphatidylglycerol-prolipoprotein diacylglyceryl transferase activity"/>
    <property type="evidence" value="ECO:0007669"/>
    <property type="project" value="UniProtKB-UniRule"/>
</dbReference>
<dbReference type="GO" id="GO:0042158">
    <property type="term" value="P:lipoprotein biosynthetic process"/>
    <property type="evidence" value="ECO:0007669"/>
    <property type="project" value="UniProtKB-UniRule"/>
</dbReference>
<dbReference type="HAMAP" id="MF_01147">
    <property type="entry name" value="Lgt"/>
    <property type="match status" value="1"/>
</dbReference>
<dbReference type="InterPro" id="IPR001640">
    <property type="entry name" value="Lgt"/>
</dbReference>
<dbReference type="NCBIfam" id="TIGR00544">
    <property type="entry name" value="lgt"/>
    <property type="match status" value="1"/>
</dbReference>
<dbReference type="PANTHER" id="PTHR30589:SF0">
    <property type="entry name" value="PHOSPHATIDYLGLYCEROL--PROLIPOPROTEIN DIACYLGLYCERYL TRANSFERASE"/>
    <property type="match status" value="1"/>
</dbReference>
<dbReference type="PANTHER" id="PTHR30589">
    <property type="entry name" value="PROLIPOPROTEIN DIACYLGLYCERYL TRANSFERASE"/>
    <property type="match status" value="1"/>
</dbReference>
<dbReference type="Pfam" id="PF01790">
    <property type="entry name" value="LGT"/>
    <property type="match status" value="1"/>
</dbReference>
<dbReference type="PROSITE" id="PS01311">
    <property type="entry name" value="LGT"/>
    <property type="match status" value="1"/>
</dbReference>
<organism>
    <name type="scientific">Xanthomonas euvesicatoria pv. vesicatoria (strain 85-10)</name>
    <name type="common">Xanthomonas campestris pv. vesicatoria</name>
    <dbReference type="NCBI Taxonomy" id="316273"/>
    <lineage>
        <taxon>Bacteria</taxon>
        <taxon>Pseudomonadati</taxon>
        <taxon>Pseudomonadota</taxon>
        <taxon>Gammaproteobacteria</taxon>
        <taxon>Lysobacterales</taxon>
        <taxon>Lysobacteraceae</taxon>
        <taxon>Xanthomonas</taxon>
    </lineage>
</organism>
<accession>Q3BX88</accession>
<feature type="chain" id="PRO_1000053526" description="Phosphatidylglycerol--prolipoprotein diacylglyceryl transferase">
    <location>
        <begin position="1"/>
        <end position="296"/>
    </location>
</feature>
<feature type="transmembrane region" description="Helical" evidence="1">
    <location>
        <begin position="10"/>
        <end position="30"/>
    </location>
</feature>
<feature type="transmembrane region" description="Helical" evidence="1">
    <location>
        <begin position="57"/>
        <end position="77"/>
    </location>
</feature>
<feature type="transmembrane region" description="Helical" evidence="1">
    <location>
        <begin position="92"/>
        <end position="112"/>
    </location>
</feature>
<feature type="transmembrane region" description="Helical" evidence="1">
    <location>
        <begin position="119"/>
        <end position="139"/>
    </location>
</feature>
<feature type="transmembrane region" description="Helical" evidence="1">
    <location>
        <begin position="194"/>
        <end position="214"/>
    </location>
</feature>
<feature type="transmembrane region" description="Helical" evidence="1">
    <location>
        <begin position="220"/>
        <end position="240"/>
    </location>
</feature>
<feature type="transmembrane region" description="Helical" evidence="1">
    <location>
        <begin position="254"/>
        <end position="274"/>
    </location>
</feature>
<feature type="binding site" evidence="1">
    <location>
        <position position="140"/>
    </location>
    <ligand>
        <name>a 1,2-diacyl-sn-glycero-3-phospho-(1'-sn-glycerol)</name>
        <dbReference type="ChEBI" id="CHEBI:64716"/>
    </ligand>
</feature>
<gene>
    <name evidence="1" type="primary">lgt</name>
    <name type="ordered locus">XCV0894</name>
</gene>
<keyword id="KW-0997">Cell inner membrane</keyword>
<keyword id="KW-1003">Cell membrane</keyword>
<keyword id="KW-0472">Membrane</keyword>
<keyword id="KW-0808">Transferase</keyword>
<keyword id="KW-0812">Transmembrane</keyword>
<keyword id="KW-1133">Transmembrane helix</keyword>
<comment type="function">
    <text evidence="1">Catalyzes the transfer of the diacylglyceryl group from phosphatidylglycerol to the sulfhydryl group of the N-terminal cysteine of a prolipoprotein, the first step in the formation of mature lipoproteins.</text>
</comment>
<comment type="catalytic activity">
    <reaction evidence="1">
        <text>L-cysteinyl-[prolipoprotein] + a 1,2-diacyl-sn-glycero-3-phospho-(1'-sn-glycerol) = an S-1,2-diacyl-sn-glyceryl-L-cysteinyl-[prolipoprotein] + sn-glycerol 1-phosphate + H(+)</text>
        <dbReference type="Rhea" id="RHEA:56712"/>
        <dbReference type="Rhea" id="RHEA-COMP:14679"/>
        <dbReference type="Rhea" id="RHEA-COMP:14680"/>
        <dbReference type="ChEBI" id="CHEBI:15378"/>
        <dbReference type="ChEBI" id="CHEBI:29950"/>
        <dbReference type="ChEBI" id="CHEBI:57685"/>
        <dbReference type="ChEBI" id="CHEBI:64716"/>
        <dbReference type="ChEBI" id="CHEBI:140658"/>
        <dbReference type="EC" id="2.5.1.145"/>
    </reaction>
</comment>
<comment type="pathway">
    <text evidence="1">Protein modification; lipoprotein biosynthesis (diacylglyceryl transfer).</text>
</comment>
<comment type="subcellular location">
    <subcellularLocation>
        <location evidence="1">Cell inner membrane</location>
        <topology evidence="1">Multi-pass membrane protein</topology>
    </subcellularLocation>
</comment>
<comment type="similarity">
    <text evidence="1">Belongs to the Lgt family.</text>
</comment>
<proteinExistence type="inferred from homology"/>
<reference key="1">
    <citation type="journal article" date="2005" name="J. Bacteriol.">
        <title>Insights into genome plasticity and pathogenicity of the plant pathogenic Bacterium Xanthomonas campestris pv. vesicatoria revealed by the complete genome sequence.</title>
        <authorList>
            <person name="Thieme F."/>
            <person name="Koebnik R."/>
            <person name="Bekel T."/>
            <person name="Berger C."/>
            <person name="Boch J."/>
            <person name="Buettner D."/>
            <person name="Caldana C."/>
            <person name="Gaigalat L."/>
            <person name="Goesmann A."/>
            <person name="Kay S."/>
            <person name="Kirchner O."/>
            <person name="Lanz C."/>
            <person name="Linke B."/>
            <person name="McHardy A.C."/>
            <person name="Meyer F."/>
            <person name="Mittenhuber G."/>
            <person name="Nies D.H."/>
            <person name="Niesbach-Kloesgen U."/>
            <person name="Patschkowski T."/>
            <person name="Rueckert C."/>
            <person name="Rupp O."/>
            <person name="Schneiker S."/>
            <person name="Schuster S.C."/>
            <person name="Vorhoelter F.J."/>
            <person name="Weber E."/>
            <person name="Puehler A."/>
            <person name="Bonas U."/>
            <person name="Bartels D."/>
            <person name="Kaiser O."/>
        </authorList>
    </citation>
    <scope>NUCLEOTIDE SEQUENCE [LARGE SCALE GENOMIC DNA]</scope>
    <source>
        <strain>85-10</strain>
    </source>
</reference>
<evidence type="ECO:0000255" key="1">
    <source>
        <dbReference type="HAMAP-Rule" id="MF_01147"/>
    </source>
</evidence>